<name>MYSP_DERFA</name>
<proteinExistence type="evidence at protein level"/>
<protein>
    <recommendedName>
        <fullName>Paramyosin</fullName>
    </recommendedName>
    <alternativeName>
        <fullName>Antigen Df642</fullName>
    </alternativeName>
    <allergenName>Der f 11</allergenName>
</protein>
<accession>Q967Z0</accession>
<feature type="chain" id="PRO_0000211247" description="Paramyosin">
    <location>
        <begin position="1"/>
        <end position="692" status="greater than"/>
    </location>
</feature>
<feature type="region of interest" description="Nonhelical region" evidence="2">
    <location>
        <begin position="1"/>
        <end position="15"/>
    </location>
</feature>
<feature type="region of interest" description="Disordered" evidence="3">
    <location>
        <begin position="26"/>
        <end position="57"/>
    </location>
</feature>
<feature type="coiled-coil region" evidence="2">
    <location>
        <begin position="16"/>
        <end position="692" status="greater than"/>
    </location>
</feature>
<feature type="non-terminal residue">
    <location>
        <position position="692"/>
    </location>
</feature>
<keyword id="KW-0020">Allergen</keyword>
<keyword id="KW-0175">Coiled coil</keyword>
<keyword id="KW-0963">Cytoplasm</keyword>
<keyword id="KW-0903">Direct protein sequencing</keyword>
<keyword id="KW-0505">Motor protein</keyword>
<keyword id="KW-0514">Muscle protein</keyword>
<keyword id="KW-0518">Myosin</keyword>
<keyword id="KW-0787">Thick filament</keyword>
<organism>
    <name type="scientific">Dermatophagoides farinae</name>
    <name type="common">American house dust mite</name>
    <dbReference type="NCBI Taxonomy" id="6954"/>
    <lineage>
        <taxon>Eukaryota</taxon>
        <taxon>Metazoa</taxon>
        <taxon>Ecdysozoa</taxon>
        <taxon>Arthropoda</taxon>
        <taxon>Chelicerata</taxon>
        <taxon>Arachnida</taxon>
        <taxon>Acari</taxon>
        <taxon>Acariformes</taxon>
        <taxon>Sarcoptiformes</taxon>
        <taxon>Astigmata</taxon>
        <taxon>Psoroptidia</taxon>
        <taxon>Analgoidea</taxon>
        <taxon>Pyroglyphidae</taxon>
        <taxon>Dermatophagoidinae</taxon>
        <taxon>Dermatophagoides</taxon>
    </lineage>
</organism>
<evidence type="ECO:0000250" key="1"/>
<evidence type="ECO:0000255" key="2"/>
<evidence type="ECO:0000256" key="3">
    <source>
        <dbReference type="SAM" id="MobiDB-lite"/>
    </source>
</evidence>
<evidence type="ECO:0000305" key="4"/>
<reference key="1">
    <citation type="journal article" date="1999" name="Clin. Exp. Allergy">
        <title>Sequence analysis and expression of a cDNA clone encoding a 98-kDa allergen in Dermatophagoides farinae.</title>
        <authorList>
            <person name="Tsai L.-C."/>
            <person name="Sun Y."/>
            <person name="Chao P.-L."/>
            <person name="Ng H.-P."/>
            <person name="Hung M."/>
            <person name="Hsieh K."/>
            <person name="Liaw S."/>
            <person name="Chua K.-Y."/>
        </authorList>
    </citation>
    <scope>NUCLEOTIDE SEQUENCE [MRNA]</scope>
</reference>
<reference key="2">
    <citation type="journal article" date="1998" name="J. Allergy Clin. Immunol.">
        <title>Isolation and characterization of a novel 98-kd Dermatophagoides farinae mite allergen.</title>
        <authorList>
            <person name="Tsai L.-C."/>
            <person name="Chao P.-L."/>
            <person name="Shen H.D."/>
            <person name="Tang R.B."/>
            <person name="Chang T.C."/>
            <person name="Chang Z.N."/>
            <person name="Hung M.W."/>
            <person name="Lee B.L."/>
            <person name="Chua K.-Y."/>
        </authorList>
    </citation>
    <scope>PARTIAL PROTEIN SEQUENCE</scope>
    <scope>CHARACTERIZATION</scope>
</reference>
<dbReference type="EMBL" id="AF352244">
    <property type="protein sequence ID" value="AAK39511.1"/>
    <property type="molecule type" value="mRNA"/>
</dbReference>
<dbReference type="SMR" id="Q967Z0"/>
<dbReference type="Allergome" id="297">
    <property type="allergen name" value="Der f 11"/>
</dbReference>
<dbReference type="Allergome" id="3249">
    <property type="allergen name" value="Der f 11.0101"/>
</dbReference>
<dbReference type="GO" id="GO:0030016">
    <property type="term" value="C:myofibril"/>
    <property type="evidence" value="ECO:0007669"/>
    <property type="project" value="UniProtKB-SubCell"/>
</dbReference>
<dbReference type="GO" id="GO:0016459">
    <property type="term" value="C:myosin complex"/>
    <property type="evidence" value="ECO:0007669"/>
    <property type="project" value="UniProtKB-KW"/>
</dbReference>
<dbReference type="GO" id="GO:0032982">
    <property type="term" value="C:myosin filament"/>
    <property type="evidence" value="ECO:0007669"/>
    <property type="project" value="UniProtKB-KW"/>
</dbReference>
<dbReference type="Gene3D" id="1.20.5.340">
    <property type="match status" value="1"/>
</dbReference>
<dbReference type="Gene3D" id="1.20.5.370">
    <property type="match status" value="2"/>
</dbReference>
<dbReference type="Gene3D" id="1.20.5.1160">
    <property type="entry name" value="Vasodilator-stimulated phosphoprotein"/>
    <property type="match status" value="1"/>
</dbReference>
<dbReference type="InterPro" id="IPR002928">
    <property type="entry name" value="Myosin_tail"/>
</dbReference>
<dbReference type="InterPro" id="IPR014751">
    <property type="entry name" value="XRCC4-like_C"/>
</dbReference>
<dbReference type="PANTHER" id="PTHR46349">
    <property type="entry name" value="CINGULIN-LIKE PROTEIN 1-RELATED"/>
    <property type="match status" value="1"/>
</dbReference>
<dbReference type="PANTHER" id="PTHR46349:SF6">
    <property type="entry name" value="MYOSIN-6-LIKE"/>
    <property type="match status" value="1"/>
</dbReference>
<dbReference type="Pfam" id="PF01576">
    <property type="entry name" value="Myosin_tail_1"/>
    <property type="match status" value="1"/>
</dbReference>
<dbReference type="SUPFAM" id="SSF90257">
    <property type="entry name" value="Myosin rod fragments"/>
    <property type="match status" value="3"/>
</dbReference>
<comment type="function">
    <text>Paramyosin is a major structural component of many thick filaments isolated from invertebrate muscles.</text>
</comment>
<comment type="subunit">
    <text evidence="1">Homodimer.</text>
</comment>
<comment type="subcellular location">
    <subcellularLocation>
        <location>Cytoplasm</location>
        <location>Myofibril</location>
    </subcellularLocation>
    <text>Thick filaments of the myofibrils.</text>
</comment>
<comment type="allergen">
    <text>Causes an allergic reaction in human. Binds to IgE.</text>
</comment>
<comment type="similarity">
    <text evidence="4">Belongs to the paramyosin family.</text>
</comment>
<sequence>MNKKRDSELAKLRKLLEDVHIESEETAHHLRQKHQAAIQEMQDQLDQLQKAKNKSDKEKQKFQAEVFELLAQLETANKEKLTALKNVEKLEYTVHELNIKIEEINRTVIELTSHKQRLSQENTELIKEVHEVKLQLDNANHLKTQIAQQLEDTRHRLEEEERKRASLENHAHTLEVELESLKVQLDEESEARLELERQLTKANGDAASWKSKYEAELQAHADEVEELRRKMAQKISEYEEQLEALLNKCSSLEKQKSRLQSEVEVLIMDLEKATRHAQQLEKRVAQLEKINLDLKNKLEEVTMLMEQAQKELRVKIAELQKLQHEYEKLRDQRDQLARENKKLTDDLAEAKSQLNDAHRRIHEQEIEIKRLENERDELSAAYKEAETLRKQEEAKNQRLIAELAQVRHDYEKRLAQKDEEIEALRKQYQIEIEQLNMRLAEAEAKLKTEIARLKKKYQAQITELELSLDAANKANIDLQKTIKKQALQITELQAHYDEVHRQLQQAVDQLGVTQRRCQALQAELEEMRIALEQANRAKRQAEQLHEEAVVRVNELTTINVNLASAKSKLESEFSALQADYDEVHKELRISDERVQKLTIELKSTKDLLIEEQERLVKLETVKKSLEQEVRTLHVRIEEVEANALAGGKRVIAKLESRIRDVEIEVEEERRRHAETDKMLRKKDHRVKELLLQ</sequence>